<dbReference type="EMBL" id="AB211060">
    <property type="protein sequence ID" value="BAD95487.1"/>
    <property type="molecule type" value="mRNA"/>
</dbReference>
<dbReference type="EMBL" id="DQ917421">
    <property type="protein sequence ID" value="ABK91524.1"/>
    <property type="molecule type" value="mRNA"/>
</dbReference>
<dbReference type="EMBL" id="DQ917422">
    <property type="protein sequence ID" value="ABK91525.1"/>
    <property type="molecule type" value="mRNA"/>
</dbReference>
<dbReference type="EMBL" id="AK010377">
    <property type="protein sequence ID" value="BAB26895.1"/>
    <property type="molecule type" value="mRNA"/>
</dbReference>
<dbReference type="EMBL" id="AK021223">
    <property type="protein sequence ID" value="BAB32334.1"/>
    <property type="molecule type" value="mRNA"/>
</dbReference>
<dbReference type="EMBL" id="CH466522">
    <property type="protein sequence ID" value="EDL26289.1"/>
    <property type="molecule type" value="Genomic_DNA"/>
</dbReference>
<dbReference type="EMBL" id="BC137808">
    <property type="protein sequence ID" value="AAI37809.1"/>
    <property type="molecule type" value="mRNA"/>
</dbReference>
<dbReference type="EMBL" id="BC137809">
    <property type="protein sequence ID" value="AAI37810.1"/>
    <property type="molecule type" value="mRNA"/>
</dbReference>
<dbReference type="CCDS" id="CCDS23336.1">
    <molecule id="Q9CWU5-1"/>
</dbReference>
<dbReference type="CCDS" id="CCDS81036.1">
    <molecule id="Q9CWU5-2"/>
</dbReference>
<dbReference type="RefSeq" id="NP_001298035.1">
    <molecule id="Q9CWU5-2"/>
    <property type="nucleotide sequence ID" value="NM_001311106.1"/>
</dbReference>
<dbReference type="RefSeq" id="NP_080166.1">
    <molecule id="Q9CWU5-1"/>
    <property type="nucleotide sequence ID" value="NM_025890.3"/>
</dbReference>
<dbReference type="PDB" id="3V69">
    <property type="method" value="X-ray"/>
    <property type="resolution" value="2.20 A"/>
    <property type="chains" value="A/B=1-124"/>
</dbReference>
<dbReference type="PDBsum" id="3V69"/>
<dbReference type="SMR" id="Q9CWU5"/>
<dbReference type="BioGRID" id="211859">
    <property type="interactions" value="1"/>
</dbReference>
<dbReference type="CORUM" id="Q9CWU5"/>
<dbReference type="FunCoup" id="Q9CWU5">
    <property type="interactions" value="6"/>
</dbReference>
<dbReference type="IntAct" id="Q9CWU5">
    <property type="interactions" value="3"/>
</dbReference>
<dbReference type="STRING" id="10090.ENSMUSP00000034737"/>
<dbReference type="iPTMnet" id="Q9CWU5"/>
<dbReference type="PhosphoSitePlus" id="Q9CWU5"/>
<dbReference type="REPRODUCTION-2DPAGE" id="Q9CWU5"/>
<dbReference type="CPTAC" id="non-CPTAC-3979"/>
<dbReference type="PaxDb" id="10090-ENSMUSP00000034737"/>
<dbReference type="ProteomicsDB" id="263434">
    <molecule id="Q9CWU5-1"/>
</dbReference>
<dbReference type="ProteomicsDB" id="263435">
    <molecule id="Q9CWU5-2"/>
</dbReference>
<dbReference type="ProteomicsDB" id="263436">
    <molecule id="Q9CWU5-3"/>
</dbReference>
<dbReference type="DNASU" id="66991"/>
<dbReference type="Ensembl" id="ENSMUST00000034737.13">
    <molecule id="Q9CWU5-1"/>
    <property type="protein sequence ID" value="ENSMUSP00000034737.7"/>
    <property type="gene ID" value="ENSMUSG00000092622.9"/>
</dbReference>
<dbReference type="Ensembl" id="ENSMUST00000167514.2">
    <molecule id="Q9CWU5-3"/>
    <property type="protein sequence ID" value="ENSMUSP00000132527.2"/>
    <property type="gene ID" value="ENSMUSG00000092622.9"/>
</dbReference>
<dbReference type="Ensembl" id="ENSMUST00000173734.9">
    <molecule id="Q9CWU5-2"/>
    <property type="protein sequence ID" value="ENSMUSP00000133915.2"/>
    <property type="gene ID" value="ENSMUSG00000092622.9"/>
</dbReference>
<dbReference type="GeneID" id="66991"/>
<dbReference type="KEGG" id="mmu:66991"/>
<dbReference type="UCSC" id="uc009qqy.2">
    <molecule id="Q9CWU5-1"/>
    <property type="organism name" value="mouse"/>
</dbReference>
<dbReference type="UCSC" id="uc009qqz.2">
    <molecule id="Q9CWU5-2"/>
    <property type="organism name" value="mouse"/>
</dbReference>
<dbReference type="AGR" id="MGI:1914241"/>
<dbReference type="CTD" id="66991"/>
<dbReference type="MGI" id="MGI:1914241">
    <property type="gene designation" value="Khdc3"/>
</dbReference>
<dbReference type="VEuPathDB" id="HostDB:ENSMUSG00000092622"/>
<dbReference type="eggNOG" id="ENOG502QQIF">
    <property type="taxonomic scope" value="Eukaryota"/>
</dbReference>
<dbReference type="GeneTree" id="ENSGT00940000162601"/>
<dbReference type="HOGENOM" id="CLU_050702_0_0_1"/>
<dbReference type="InParanoid" id="Q9CWU5"/>
<dbReference type="OMA" id="AVWRADY"/>
<dbReference type="OrthoDB" id="9790568at2759"/>
<dbReference type="PhylomeDB" id="Q9CWU5"/>
<dbReference type="TreeFam" id="TF338690"/>
<dbReference type="BioGRID-ORCS" id="66991">
    <property type="hits" value="1 hit in 76 CRISPR screens"/>
</dbReference>
<dbReference type="EvolutionaryTrace" id="Q9CWU5"/>
<dbReference type="PRO" id="PR:Q9CWU5"/>
<dbReference type="Proteomes" id="UP000000589">
    <property type="component" value="Chromosome 9"/>
</dbReference>
<dbReference type="RNAct" id="Q9CWU5">
    <property type="molecule type" value="protein"/>
</dbReference>
<dbReference type="Bgee" id="ENSMUSG00000092622">
    <property type="expression patterns" value="Expressed in blastoderm cell in morula and 36 other cell types or tissues"/>
</dbReference>
<dbReference type="ExpressionAtlas" id="Q9CWU5">
    <property type="expression patterns" value="baseline and differential"/>
</dbReference>
<dbReference type="GO" id="GO:0045179">
    <property type="term" value="C:apical cortex"/>
    <property type="evidence" value="ECO:0000314"/>
    <property type="project" value="MGI"/>
</dbReference>
<dbReference type="GO" id="GO:0005938">
    <property type="term" value="C:cell cortex"/>
    <property type="evidence" value="ECO:0000314"/>
    <property type="project" value="UniProtKB"/>
</dbReference>
<dbReference type="GO" id="GO:0005813">
    <property type="term" value="C:centrosome"/>
    <property type="evidence" value="ECO:0000314"/>
    <property type="project" value="UniProtKB"/>
</dbReference>
<dbReference type="GO" id="GO:0005694">
    <property type="term" value="C:chromosome"/>
    <property type="evidence" value="ECO:0007669"/>
    <property type="project" value="UniProtKB-SubCell"/>
</dbReference>
<dbReference type="GO" id="GO:0140095">
    <property type="term" value="C:cytoplasmic lattice"/>
    <property type="evidence" value="ECO:0000314"/>
    <property type="project" value="UniProtKB"/>
</dbReference>
<dbReference type="GO" id="GO:0005739">
    <property type="term" value="C:mitochondrion"/>
    <property type="evidence" value="ECO:0000314"/>
    <property type="project" value="UniProtKB"/>
</dbReference>
<dbReference type="GO" id="GO:0005634">
    <property type="term" value="C:nucleus"/>
    <property type="evidence" value="ECO:0000314"/>
    <property type="project" value="UniProtKB"/>
</dbReference>
<dbReference type="GO" id="GO:1990917">
    <property type="term" value="C:ooplasm"/>
    <property type="evidence" value="ECO:0000314"/>
    <property type="project" value="MGI"/>
</dbReference>
<dbReference type="GO" id="GO:0032991">
    <property type="term" value="C:protein-containing complex"/>
    <property type="evidence" value="ECO:0000314"/>
    <property type="project" value="MGI"/>
</dbReference>
<dbReference type="GO" id="GO:0106333">
    <property type="term" value="C:subcortical maternal complex"/>
    <property type="evidence" value="ECO:0000314"/>
    <property type="project" value="UniProtKB"/>
</dbReference>
<dbReference type="GO" id="GO:0003723">
    <property type="term" value="F:RNA binding"/>
    <property type="evidence" value="ECO:0007669"/>
    <property type="project" value="UniProtKB-KW"/>
</dbReference>
<dbReference type="GO" id="GO:0140094">
    <property type="term" value="F:structural constituent of cytoplasmic lattice"/>
    <property type="evidence" value="ECO:0000314"/>
    <property type="project" value="UniProtKB"/>
</dbReference>
<dbReference type="GO" id="GO:0007015">
    <property type="term" value="P:actin filament organization"/>
    <property type="evidence" value="ECO:0000315"/>
    <property type="project" value="UniProtKB"/>
</dbReference>
<dbReference type="GO" id="GO:0051656">
    <property type="term" value="P:establishment of organelle localization"/>
    <property type="evidence" value="ECO:0000315"/>
    <property type="project" value="UniProtKB"/>
</dbReference>
<dbReference type="GO" id="GO:0090307">
    <property type="term" value="P:mitotic spindle assembly"/>
    <property type="evidence" value="ECO:0000315"/>
    <property type="project" value="MGI"/>
</dbReference>
<dbReference type="GO" id="GO:0007094">
    <property type="term" value="P:mitotic spindle assembly checkpoint signaling"/>
    <property type="evidence" value="ECO:0000315"/>
    <property type="project" value="MGI"/>
</dbReference>
<dbReference type="GO" id="GO:0043066">
    <property type="term" value="P:negative regulation of apoptotic process"/>
    <property type="evidence" value="ECO:0000315"/>
    <property type="project" value="UniProtKB"/>
</dbReference>
<dbReference type="GO" id="GO:1900006">
    <property type="term" value="P:positive regulation of dendrite development"/>
    <property type="evidence" value="ECO:0000315"/>
    <property type="project" value="UniProtKB"/>
</dbReference>
<dbReference type="GO" id="GO:2000781">
    <property type="term" value="P:positive regulation of double-strand break repair"/>
    <property type="evidence" value="ECO:0000315"/>
    <property type="project" value="UniProtKB"/>
</dbReference>
<dbReference type="GO" id="GO:1905168">
    <property type="term" value="P:positive regulation of double-strand break repair via homologous recombination"/>
    <property type="evidence" value="ECO:0000315"/>
    <property type="project" value="UniProtKB"/>
</dbReference>
<dbReference type="GO" id="GO:0040019">
    <property type="term" value="P:positive regulation of embryonic development"/>
    <property type="evidence" value="ECO:0000315"/>
    <property type="project" value="UniProtKB"/>
</dbReference>
<dbReference type="GO" id="GO:0050769">
    <property type="term" value="P:positive regulation of neurogenesis"/>
    <property type="evidence" value="ECO:0000315"/>
    <property type="project" value="UniProtKB"/>
</dbReference>
<dbReference type="GO" id="GO:0140089">
    <property type="term" value="P:protein storage"/>
    <property type="evidence" value="ECO:0000314"/>
    <property type="project" value="UniProtKB"/>
</dbReference>
<dbReference type="GO" id="GO:0032880">
    <property type="term" value="P:regulation of protein localization"/>
    <property type="evidence" value="ECO:0000315"/>
    <property type="project" value="UniProtKB"/>
</dbReference>
<dbReference type="GO" id="GO:0031297">
    <property type="term" value="P:replication fork processing"/>
    <property type="evidence" value="ECO:0000315"/>
    <property type="project" value="UniProtKB"/>
</dbReference>
<dbReference type="CDD" id="cd12795">
    <property type="entry name" value="FILIA_N_like"/>
    <property type="match status" value="1"/>
</dbReference>
<dbReference type="Gene3D" id="3.30.1370.10">
    <property type="entry name" value="K Homology domain, type 1"/>
    <property type="match status" value="1"/>
</dbReference>
<dbReference type="InterPro" id="IPR036612">
    <property type="entry name" value="KH_dom_type_1_sf"/>
</dbReference>
<dbReference type="InterPro" id="IPR051778">
    <property type="entry name" value="KHDC1"/>
</dbReference>
<dbReference type="InterPro" id="IPR031952">
    <property type="entry name" value="MOEP19_KH-like"/>
</dbReference>
<dbReference type="PANTHER" id="PTHR19447:SF15">
    <property type="entry name" value="KH DOMAIN-CONTAINING PROTEIN 3"/>
    <property type="match status" value="1"/>
</dbReference>
<dbReference type="PANTHER" id="PTHR19447">
    <property type="entry name" value="OOCYTE-EXPRESSED PROTEIN HOMOLOG-RELATED"/>
    <property type="match status" value="1"/>
</dbReference>
<dbReference type="Pfam" id="PF16005">
    <property type="entry name" value="MOEP19"/>
    <property type="match status" value="1"/>
</dbReference>
<protein>
    <recommendedName>
        <fullName evidence="19">KH domain-containing protein 3</fullName>
    </recommendedName>
    <alternativeName>
        <fullName evidence="16">Protein Filia</fullName>
    </alternativeName>
</protein>
<gene>
    <name evidence="17 24" type="primary">Khdc3</name>
</gene>
<evidence type="ECO:0000250" key="1">
    <source>
        <dbReference type="UniProtKB" id="Q587J8"/>
    </source>
</evidence>
<evidence type="ECO:0000256" key="2">
    <source>
        <dbReference type="SAM" id="MobiDB-lite"/>
    </source>
</evidence>
<evidence type="ECO:0000269" key="3">
    <source>
    </source>
</evidence>
<evidence type="ECO:0000269" key="4">
    <source>
    </source>
</evidence>
<evidence type="ECO:0000269" key="5">
    <source>
    </source>
</evidence>
<evidence type="ECO:0000269" key="6">
    <source>
    </source>
</evidence>
<evidence type="ECO:0000269" key="7">
    <source>
    </source>
</evidence>
<evidence type="ECO:0000269" key="8">
    <source>
    </source>
</evidence>
<evidence type="ECO:0000269" key="9">
    <source>
    </source>
</evidence>
<evidence type="ECO:0000269" key="10">
    <source>
    </source>
</evidence>
<evidence type="ECO:0000269" key="11">
    <source>
    </source>
</evidence>
<evidence type="ECO:0000269" key="12">
    <source>
    </source>
</evidence>
<evidence type="ECO:0000269" key="13">
    <source>
    </source>
</evidence>
<evidence type="ECO:0000269" key="14">
    <source>
    </source>
</evidence>
<evidence type="ECO:0000269" key="15">
    <source ref="3"/>
</evidence>
<evidence type="ECO:0000303" key="16">
    <source>
    </source>
</evidence>
<evidence type="ECO:0000303" key="17">
    <source>
    </source>
</evidence>
<evidence type="ECO:0000303" key="18">
    <source ref="3"/>
</evidence>
<evidence type="ECO:0000305" key="19"/>
<evidence type="ECO:0000312" key="20">
    <source>
        <dbReference type="EMBL" id="AAI37809.1"/>
    </source>
</evidence>
<evidence type="ECO:0000312" key="21">
    <source>
        <dbReference type="EMBL" id="ABK91524.1"/>
    </source>
</evidence>
<evidence type="ECO:0000312" key="22">
    <source>
        <dbReference type="EMBL" id="BAB26895.1"/>
    </source>
</evidence>
<evidence type="ECO:0000312" key="23">
    <source>
        <dbReference type="EMBL" id="BAD95487.1"/>
    </source>
</evidence>
<evidence type="ECO:0000312" key="24">
    <source>
        <dbReference type="MGI" id="MGI:1914241"/>
    </source>
</evidence>
<evidence type="ECO:0007829" key="25">
    <source>
        <dbReference type="PDB" id="3V69"/>
    </source>
</evidence>
<reference evidence="19" key="1">
    <citation type="journal article" date="2008" name="Development">
        <title>Maternally derived FILIA-MATER complex localizes asymmetrically in cleavage-stage mouse embryos.</title>
        <authorList>
            <person name="Ohsugi M."/>
            <person name="Zheng P."/>
            <person name="Baibakov B."/>
            <person name="Li L."/>
            <person name="Dean J."/>
        </authorList>
    </citation>
    <scope>NUCLEOTIDE SEQUENCE [MRNA] (ISOFORMS 1 AND 2)</scope>
    <scope>INTERACTION WITH NLRP5</scope>
    <scope>SUBCELLULAR LOCATION</scope>
    <scope>TISSUE SPECIFICITY</scope>
    <scope>DEVELOPMENTAL STAGE</scope>
    <scope>IDENTIFICATION BY MASS SPECTROMETRY</scope>
    <source>
        <tissue evidence="3">Ovary</tissue>
    </source>
</reference>
<reference evidence="19 23" key="2">
    <citation type="submission" date="2005-04" db="EMBL/GenBank/DDBJ databases">
        <authorList>
            <person name="Yamanaka S."/>
        </authorList>
    </citation>
    <scope>NUCLEOTIDE SEQUENCE [MRNA] (ISOFORM 1)</scope>
</reference>
<reference evidence="19 23" key="3">
    <citation type="submission" date="2006-08" db="EMBL/GenBank/DDBJ databases">
        <title>OEEP, an egg and embryo specific protein, predominantly restricted to the periphery of the oocyte and early embryonic stages.</title>
        <authorList>
            <person name="Sachdev M."/>
            <person name="Mandal A."/>
            <person name="Chertihin O."/>
            <person name="Digilio L."/>
            <person name="Flickinger C.J."/>
            <person name="Herr J.C."/>
        </authorList>
    </citation>
    <scope>NUCLEOTIDE SEQUENCE [MRNA] (ISOFORMS 1 AND 3)</scope>
    <source>
        <tissue evidence="21">Ovary</tissue>
    </source>
</reference>
<reference evidence="19 22" key="4">
    <citation type="journal article" date="2005" name="Science">
        <title>The transcriptional landscape of the mammalian genome.</title>
        <authorList>
            <person name="Carninci P."/>
            <person name="Kasukawa T."/>
            <person name="Katayama S."/>
            <person name="Gough J."/>
            <person name="Frith M.C."/>
            <person name="Maeda N."/>
            <person name="Oyama R."/>
            <person name="Ravasi T."/>
            <person name="Lenhard B."/>
            <person name="Wells C."/>
            <person name="Kodzius R."/>
            <person name="Shimokawa K."/>
            <person name="Bajic V.B."/>
            <person name="Brenner S.E."/>
            <person name="Batalov S."/>
            <person name="Forrest A.R."/>
            <person name="Zavolan M."/>
            <person name="Davis M.J."/>
            <person name="Wilming L.G."/>
            <person name="Aidinis V."/>
            <person name="Allen J.E."/>
            <person name="Ambesi-Impiombato A."/>
            <person name="Apweiler R."/>
            <person name="Aturaliya R.N."/>
            <person name="Bailey T.L."/>
            <person name="Bansal M."/>
            <person name="Baxter L."/>
            <person name="Beisel K.W."/>
            <person name="Bersano T."/>
            <person name="Bono H."/>
            <person name="Chalk A.M."/>
            <person name="Chiu K.P."/>
            <person name="Choudhary V."/>
            <person name="Christoffels A."/>
            <person name="Clutterbuck D.R."/>
            <person name="Crowe M.L."/>
            <person name="Dalla E."/>
            <person name="Dalrymple B.P."/>
            <person name="de Bono B."/>
            <person name="Della Gatta G."/>
            <person name="di Bernardo D."/>
            <person name="Down T."/>
            <person name="Engstrom P."/>
            <person name="Fagiolini M."/>
            <person name="Faulkner G."/>
            <person name="Fletcher C.F."/>
            <person name="Fukushima T."/>
            <person name="Furuno M."/>
            <person name="Futaki S."/>
            <person name="Gariboldi M."/>
            <person name="Georgii-Hemming P."/>
            <person name="Gingeras T.R."/>
            <person name="Gojobori T."/>
            <person name="Green R.E."/>
            <person name="Gustincich S."/>
            <person name="Harbers M."/>
            <person name="Hayashi Y."/>
            <person name="Hensch T.K."/>
            <person name="Hirokawa N."/>
            <person name="Hill D."/>
            <person name="Huminiecki L."/>
            <person name="Iacono M."/>
            <person name="Ikeo K."/>
            <person name="Iwama A."/>
            <person name="Ishikawa T."/>
            <person name="Jakt M."/>
            <person name="Kanapin A."/>
            <person name="Katoh M."/>
            <person name="Kawasawa Y."/>
            <person name="Kelso J."/>
            <person name="Kitamura H."/>
            <person name="Kitano H."/>
            <person name="Kollias G."/>
            <person name="Krishnan S.P."/>
            <person name="Kruger A."/>
            <person name="Kummerfeld S.K."/>
            <person name="Kurochkin I.V."/>
            <person name="Lareau L.F."/>
            <person name="Lazarevic D."/>
            <person name="Lipovich L."/>
            <person name="Liu J."/>
            <person name="Liuni S."/>
            <person name="McWilliam S."/>
            <person name="Madan Babu M."/>
            <person name="Madera M."/>
            <person name="Marchionni L."/>
            <person name="Matsuda H."/>
            <person name="Matsuzawa S."/>
            <person name="Miki H."/>
            <person name="Mignone F."/>
            <person name="Miyake S."/>
            <person name="Morris K."/>
            <person name="Mottagui-Tabar S."/>
            <person name="Mulder N."/>
            <person name="Nakano N."/>
            <person name="Nakauchi H."/>
            <person name="Ng P."/>
            <person name="Nilsson R."/>
            <person name="Nishiguchi S."/>
            <person name="Nishikawa S."/>
            <person name="Nori F."/>
            <person name="Ohara O."/>
            <person name="Okazaki Y."/>
            <person name="Orlando V."/>
            <person name="Pang K.C."/>
            <person name="Pavan W.J."/>
            <person name="Pavesi G."/>
            <person name="Pesole G."/>
            <person name="Petrovsky N."/>
            <person name="Piazza S."/>
            <person name="Reed J."/>
            <person name="Reid J.F."/>
            <person name="Ring B.Z."/>
            <person name="Ringwald M."/>
            <person name="Rost B."/>
            <person name="Ruan Y."/>
            <person name="Salzberg S.L."/>
            <person name="Sandelin A."/>
            <person name="Schneider C."/>
            <person name="Schoenbach C."/>
            <person name="Sekiguchi K."/>
            <person name="Semple C.A."/>
            <person name="Seno S."/>
            <person name="Sessa L."/>
            <person name="Sheng Y."/>
            <person name="Shibata Y."/>
            <person name="Shimada H."/>
            <person name="Shimada K."/>
            <person name="Silva D."/>
            <person name="Sinclair B."/>
            <person name="Sperling S."/>
            <person name="Stupka E."/>
            <person name="Sugiura K."/>
            <person name="Sultana R."/>
            <person name="Takenaka Y."/>
            <person name="Taki K."/>
            <person name="Tammoja K."/>
            <person name="Tan S.L."/>
            <person name="Tang S."/>
            <person name="Taylor M.S."/>
            <person name="Tegner J."/>
            <person name="Teichmann S.A."/>
            <person name="Ueda H.R."/>
            <person name="van Nimwegen E."/>
            <person name="Verardo R."/>
            <person name="Wei C.L."/>
            <person name="Yagi K."/>
            <person name="Yamanishi H."/>
            <person name="Zabarovsky E."/>
            <person name="Zhu S."/>
            <person name="Zimmer A."/>
            <person name="Hide W."/>
            <person name="Bult C."/>
            <person name="Grimmond S.M."/>
            <person name="Teasdale R.D."/>
            <person name="Liu E.T."/>
            <person name="Brusic V."/>
            <person name="Quackenbush J."/>
            <person name="Wahlestedt C."/>
            <person name="Mattick J.S."/>
            <person name="Hume D.A."/>
            <person name="Kai C."/>
            <person name="Sasaki D."/>
            <person name="Tomaru Y."/>
            <person name="Fukuda S."/>
            <person name="Kanamori-Katayama M."/>
            <person name="Suzuki M."/>
            <person name="Aoki J."/>
            <person name="Arakawa T."/>
            <person name="Iida J."/>
            <person name="Imamura K."/>
            <person name="Itoh M."/>
            <person name="Kato T."/>
            <person name="Kawaji H."/>
            <person name="Kawagashira N."/>
            <person name="Kawashima T."/>
            <person name="Kojima M."/>
            <person name="Kondo S."/>
            <person name="Konno H."/>
            <person name="Nakano K."/>
            <person name="Ninomiya N."/>
            <person name="Nishio T."/>
            <person name="Okada M."/>
            <person name="Plessy C."/>
            <person name="Shibata K."/>
            <person name="Shiraki T."/>
            <person name="Suzuki S."/>
            <person name="Tagami M."/>
            <person name="Waki K."/>
            <person name="Watahiki A."/>
            <person name="Okamura-Oho Y."/>
            <person name="Suzuki H."/>
            <person name="Kawai J."/>
            <person name="Hayashizaki Y."/>
        </authorList>
    </citation>
    <scope>NUCLEOTIDE SEQUENCE [LARGE SCALE MRNA] (ISOFORM 1)</scope>
    <source>
        <strain evidence="22">C57BL/6J</strain>
        <tissue evidence="22">Embryonic stem cell</tissue>
    </source>
</reference>
<reference evidence="19 23" key="5">
    <citation type="submission" date="2005-07" db="EMBL/GenBank/DDBJ databases">
        <authorList>
            <person name="Mural R.J."/>
            <person name="Adams M.D."/>
            <person name="Myers E.W."/>
            <person name="Smith H.O."/>
            <person name="Venter J.C."/>
        </authorList>
    </citation>
    <scope>NUCLEOTIDE SEQUENCE [LARGE SCALE GENOMIC DNA]</scope>
</reference>
<reference evidence="19 20" key="6">
    <citation type="journal article" date="2004" name="Genome Res.">
        <title>The status, quality, and expansion of the NIH full-length cDNA project: the Mammalian Gene Collection (MGC).</title>
        <authorList>
            <consortium name="The MGC Project Team"/>
        </authorList>
    </citation>
    <scope>NUCLEOTIDE SEQUENCE [LARGE SCALE MRNA] (ISOFORM 1)</scope>
</reference>
<reference key="7">
    <citation type="journal article" date="2007" name="Genomics">
        <title>Atypical structure and phylogenomic evolution of the new eutherian oocyte- and embryo-expressed KHDC1/DPPA5/ECAT1/OOEP gene family.</title>
        <authorList>
            <person name="Pierre A."/>
            <person name="Gautier M."/>
            <person name="Callebaut I."/>
            <person name="Bontoux M."/>
            <person name="Jeanpierre E."/>
            <person name="Pontarotti P."/>
            <person name="Monget P."/>
        </authorList>
    </citation>
    <scope>IDENTIFICATION</scope>
</reference>
<reference evidence="19" key="8">
    <citation type="journal article" date="2008" name="Dev. Cell">
        <title>A subcortical maternal complex essential for preimplantation mouse embryogenesis.</title>
        <authorList>
            <person name="Li L."/>
            <person name="Baibakov B."/>
            <person name="Dean J."/>
        </authorList>
    </citation>
    <scope>FUNCTION</scope>
    <scope>IDENTIFICATION IN THE SCMC COMPLEX</scope>
    <scope>SUBCELLULAR LOCATION</scope>
    <scope>INTERACTION WITH NLRP5</scope>
</reference>
<reference evidence="19" key="9">
    <citation type="journal article" date="2009" name="Proc. Natl. Acad. Sci. U.S.A.">
        <title>Role of Filia, a maternal effect gene, in maintaining euploidy during cleavage-stage mouse embryogenesis.</title>
        <authorList>
            <person name="Zheng P."/>
            <person name="Dean J."/>
        </authorList>
    </citation>
    <scope>FUNCTION</scope>
    <scope>DISRUPTION PHENOTYPE</scope>
</reference>
<reference key="10">
    <citation type="journal article" date="2014" name="Nat. Commun.">
        <title>The subcortical maternal complex controls symmetric division of mouse zygotes by regulating F-actin dynamics.</title>
        <authorList>
            <person name="Yu X.J."/>
            <person name="Yi Z."/>
            <person name="Gao Z."/>
            <person name="Qin D."/>
            <person name="Zhai Y."/>
            <person name="Chen X."/>
            <person name="Ou-Yang Y."/>
            <person name="Wang Z.B."/>
            <person name="Zheng P."/>
            <person name="Zhu M.S."/>
            <person name="Wang H."/>
            <person name="Sun Q.Y."/>
            <person name="Dean J."/>
            <person name="Li L."/>
        </authorList>
    </citation>
    <scope>FUNCTION</scope>
    <scope>SUBCELLULAR LOCATION</scope>
</reference>
<reference key="11">
    <citation type="journal article" date="2015" name="Cell Stem Cell">
        <title>Filia Is an ESC-Specific Regulator of DNA Damage Response and Safeguards Genomic Stability.</title>
        <authorList>
            <person name="Zhao B."/>
            <person name="Zhang W.D."/>
            <person name="Duan Y.L."/>
            <person name="Lu Y.Q."/>
            <person name="Cun Y.X."/>
            <person name="Li C.H."/>
            <person name="Guo K."/>
            <person name="Nie W.H."/>
            <person name="Li L."/>
            <person name="Zhang R."/>
            <person name="Zheng P."/>
        </authorList>
    </citation>
    <scope>FUNCTION</scope>
    <scope>INTERACTION WITH PARP1 AND NUMA1</scope>
    <scope>SUBCELLULAR LOCATION</scope>
    <scope>INDUCTION</scope>
    <scope>PHOSPHORYLATION AT SER-349</scope>
    <scope>MUTAGENESIS OF SER-349</scope>
</reference>
<reference key="12">
    <citation type="journal article" date="2018" name="Cell Res.">
        <title>Mouse embryonic stem cells have increased capacity for replication fork restart driven by the specific Filia-Floped protein complex.</title>
        <authorList>
            <person name="Zhao B."/>
            <person name="Zhang W."/>
            <person name="Cun Y."/>
            <person name="Li J."/>
            <person name="Liu Y."/>
            <person name="Gao J."/>
            <person name="Zhu H."/>
            <person name="Zhou H."/>
            <person name="Zhang R."/>
            <person name="Zheng P."/>
        </authorList>
    </citation>
    <scope>FUNCTION</scope>
    <scope>INTERACTION WITH OOEP; BLM AND TRIM25</scope>
    <scope>SUBCELLULAR LOCATION</scope>
    <scope>DISRUPTION PHENOTYPE</scope>
    <scope>PHOSPHORYLATION AT SER-151</scope>
    <scope>MUTAGENESIS OF SER-151 AND SER-349</scope>
</reference>
<reference key="13">
    <citation type="journal article" date="2018" name="J. Mol. Cell Biol.">
        <title>Zbed3 participates in the subcortical maternal complex and regulates the distribution of organelles.</title>
        <authorList>
            <person name="Gao Z."/>
            <person name="Zhang X."/>
            <person name="Yu X."/>
            <person name="Qin D."/>
            <person name="Xiao Y."/>
            <person name="Yu Y."/>
            <person name="Xiang Y."/>
            <person name="Nie X."/>
            <person name="Lu X."/>
            <person name="Liu W."/>
            <person name="Yi Z."/>
            <person name="Li L."/>
        </authorList>
    </citation>
    <scope>FUNCTION</scope>
    <scope>IDENTIFICATION IN THE SCMC COMPLEX</scope>
</reference>
<reference key="14">
    <citation type="journal article" date="2019" name="Development">
        <title>The subcortical maternal complex protein Nlrp4f is involved in cytoplasmic lattice formation and organelle distribution.</title>
        <authorList>
            <person name="Qin D."/>
            <person name="Gao Z."/>
            <person name="Xiao Y."/>
            <person name="Zhang X."/>
            <person name="Ma H."/>
            <person name="Yu X."/>
            <person name="Nie X."/>
            <person name="Fan N."/>
            <person name="Wang X."/>
            <person name="Ouyang Y."/>
            <person name="Sun Q.Y."/>
            <person name="Yi Z."/>
            <person name="Li L."/>
        </authorList>
    </citation>
    <scope>FUNCTION</scope>
    <scope>DISRUPTION PHENOTYPE</scope>
</reference>
<reference key="15">
    <citation type="journal article" date="2020" name="Sci. Adv.">
        <title>Genome integrity and neurogenesis of postnatal hippocampal neural stem/progenitor cells require a unique regulator Filia.</title>
        <authorList>
            <person name="Li J."/>
            <person name="Shang Y."/>
            <person name="Wang L."/>
            <person name="Zhao B."/>
            <person name="Sun C."/>
            <person name="Li J."/>
            <person name="Liu S."/>
            <person name="Li C."/>
            <person name="Tang M."/>
            <person name="Meng F.L."/>
            <person name="Zheng P."/>
        </authorList>
    </citation>
    <scope>FUNCTION</scope>
    <scope>SUBCELLULAR LOCATION</scope>
    <scope>DEVELOPMENTAL STAGE</scope>
    <scope>INDUCTION</scope>
    <scope>DISRUPTION PHENOTYPE</scope>
</reference>
<reference key="16">
    <citation type="journal article" date="2023" name="Cell">
        <title>Mammalian oocytes store proteins for the early embryo on cytoplasmic lattices.</title>
        <authorList>
            <person name="Jentoft I.M.A."/>
            <person name="Baeuerlein F.J.B."/>
            <person name="Welp L.M."/>
            <person name="Cooper B.H."/>
            <person name="Petrovic A."/>
            <person name="So C."/>
            <person name="Penir S.M."/>
            <person name="Politi A.Z."/>
            <person name="Horokhovskyi Y."/>
            <person name="Takala I."/>
            <person name="Eckel H."/>
            <person name="Moltrecht R."/>
            <person name="Lenart P."/>
            <person name="Cavazza T."/>
            <person name="Liepe J."/>
            <person name="Brose N."/>
            <person name="Urlaub H."/>
            <person name="Fernandez-Busnadiego R."/>
            <person name="Schuh M."/>
        </authorList>
    </citation>
    <scope>FUNCTION</scope>
    <scope>IDENTIFICATION IN THE SCMC COMPLEX</scope>
    <scope>SUBCELLULAR LOCATION</scope>
</reference>
<reference key="17">
    <citation type="journal article" date="2024" name="Nat. Struct. Mol. Biol.">
        <title>Structural basis of the subcortical maternal complex and its implications in reproductive disorders.</title>
        <authorList>
            <person name="Chi P."/>
            <person name="Ou G."/>
            <person name="Qin D."/>
            <person name="Han Z."/>
            <person name="Li J."/>
            <person name="Xiao Q."/>
            <person name="Gao Z."/>
            <person name="Xu C."/>
            <person name="Qi Q."/>
            <person name="Liu Q."/>
            <person name="Liu S."/>
            <person name="Li J."/>
            <person name="Guo L."/>
            <person name="Lu Y."/>
            <person name="Chen J."/>
            <person name="Wang X."/>
            <person name="Shi H."/>
            <person name="Li L."/>
            <person name="Deng D."/>
        </authorList>
    </citation>
    <scope>IDENTIFICATION IN THE SCMC COMPLEX</scope>
</reference>
<reference evidence="19" key="18">
    <citation type="journal article" date="2010" name="Acta Crystallogr. F">
        <title>Preliminary crystallographic analysis of the N-terminal domain of FILIA, a protein essential for embryogenesis.</title>
        <authorList>
            <person name="Wang J."/>
            <person name="Zhang T.C."/>
            <person name="Liu X."/>
        </authorList>
    </citation>
    <scope>PRELIMINARY X-RAY CRYSTALLOGRAPHY (1.8 ANGSTROMS) OF 1-124</scope>
</reference>
<reference key="19">
    <citation type="journal article" date="2012" name="PLoS ONE">
        <title>The N-terminus of FILIA forms an atypical KH domain with a unique extension involved in interaction with RNA.</title>
        <authorList>
            <person name="Wang J."/>
            <person name="Xu M."/>
            <person name="Zhu K."/>
            <person name="Li L."/>
            <person name="Liu X."/>
        </authorList>
    </citation>
    <scope>X-RAY CRYSTALLOGRAPHY (2.20 ANGSTROMS) OF 1-124</scope>
    <scope>FUNCTION</scope>
    <scope>DOMAIN</scope>
</reference>
<sequence>MASLKRFQTLVPLDHKQGTLFEIIGEPKLPKWFHVECLEDPKRLYVEPRLLEIMFGKDGEHIPHLESMLHTLIHVNVWGPERRAEIWIFGPPPFRRDVDRMLTDLAHYCRMKLMEIEALEAGVERRRMAAHKAATQPAPVKVREAAPRPASVKVPETATQPAPVKVREAAPQPAPVQEVREAAPQQASVQEEVREAATEQAPVQEVREAATEQAPVQEVSEAATEQAPVQEVNEAATEQASVQAVREAATRPAPGKVRKAATQPAPVQVCQEATQLAPVKVREAATQPASGKVREAATQLAPVKVRKAATQLAPVKVHEAATQPAPGKVSDAATQSASVQVREAATQLSPVEATDTSQLAQVKADEAFAQHTSGEAHQVANGQSPIEVCETATGQHSLDVSRALSQKCPEVFEWETQSCLDGSYVIVQPPRDAWESFIIL</sequence>
<proteinExistence type="evidence at protein level"/>
<accession>Q9CWU5</accession>
<accession>A7YIL2</accession>
<accession>Q9CRD6</accession>
<comment type="function">
    <text evidence="4 5 6 7 8 9 10 11 12 13">Component of the subcortical maternal complex (SCMC), a multiprotein complex that plays a key role in early embryonic development (PubMed:18804437, PubMed:19376971, PubMed:25208553, PubMed:28992324, PubMed:29125140, PubMed:31575650, PubMed:37922900). The SCMC complex is a structural constituent of cytoplasmic lattices, which consist in fibrous structures found in the cytoplasm of oocytes and preimplantation embryos (PubMed:31575650, PubMed:37922900). They are required to store maternal proteins critical for embryonic development, such as proteins that control epigenetic reprogramming of the preimplantation embryo, and prevent their degradation or activation (PubMed:37922900). KHDC3 ensures proper spindle assembly by regulating the localization of AURKA via RHOA signaling and of PLK1 via a RHOA-independent process (PubMed:19376971). Required for the localization of MAD2L1 to kinetochores to enable spindle assembly checkpoint function (PubMed:19376971). As part of the OOEP-KHDC3 scaffold, recruits BLM and TRIM25 to DNA replication forks, thereby promoting the ubiquitination of BLM by TRIM25, enhancing BLM retainment at replication forks and therefore promoting stalled replication fork restart (PubMed:29125140, PubMed:33115731). Regulates homologous recombination-mediated DNA repair via recruitment of RAD51 to sites of DNA double-strand breaks, and sustainment of PARP1 activity, which in turn modulates downstream ATM or ATR activation (PubMed:25936915, PubMed:33115731). Activation of ATM or ATR in response to DNA double-strand breaks may be cell-type specific (PubMed:25936915, PubMed:33115731). Its role in DNA double-strand break repair is independent of its role in restarting stalled replication forks (PubMed:29125140). Promotes neural stem cell neurogenesis and neuronal differentiation in the hippocampus (PubMed:33115731). May regulate normal development of learning, memory and anxiety (PubMed:33115731). Capable of binding RNA (PubMed:22276159).</text>
</comment>
<comment type="subunit">
    <text evidence="1 3 4 8 9 10 13 14">Component of the subcortical maternal complex (SCMC), at least composed of NLRP5, KHDC3, OOEP, and TLE6 (PubMed:18057100, PubMed:18804437, PubMed:28992324, PubMed:37922900, PubMed:38177687). Within the complex, interacts with NLRP5, OOEP and TLE6 (PubMed:18057100, PubMed:18804437). The SCMC may facilitate translocation of its components between the nuclear and cytoplasmic compartments (By similarity). Forms a scaffold complex with OOEP/FLOPED, and interacts with BLM and TRIM25 at DNA replication forks (PubMed:29125140). Interacts with PARP1; the interaction is increased following the formation of DNA double-strand breaks (PubMed:25936915). Interacts (via C-terminus) with NUMA1 (PubMed:25936915).</text>
</comment>
<comment type="interaction">
    <interactant intactId="EBI-2905804">
        <id>Q9CWU5</id>
    </interactant>
    <interactant intactId="EBI-2905719">
        <id>Q9R1M5</id>
        <label>Nlrp5</label>
    </interactant>
    <organismsDiffer>false</organismsDiffer>
    <experiments>3</experiments>
</comment>
<comment type="subcellular location">
    <subcellularLocation>
        <location evidence="13">Cytoplasm</location>
    </subcellularLocation>
    <subcellularLocation>
        <location evidence="3 4 8">Cytoplasm</location>
        <location evidence="3 4 8">Cell cortex</location>
    </subcellularLocation>
    <subcellularLocation>
        <location evidence="8 10 12">Nucleus</location>
    </subcellularLocation>
    <subcellularLocation>
        <location evidence="8">Mitochondrion</location>
    </subcellularLocation>
    <subcellularLocation>
        <location evidence="8">Cytoplasm</location>
        <location evidence="8">Cytoskeleton</location>
        <location evidence="8">Microtubule organizing center</location>
        <location evidence="8">Centrosome</location>
    </subcellularLocation>
    <subcellularLocation>
        <location evidence="1">Chromosome</location>
    </subcellularLocation>
    <text evidence="1 3 7 8 13">Core component of cytoplasmic lattices in oocytes (PubMed:37922900). Expressed in the subcortex of oocytes (PubMed:25208553). Located throughout the cell cortex of ovulated eggs in a complex with NLRP5 (PubMed:18057100). After fertilization, restricted to the apical cortex and excluded from regions of cell-cell contact (PubMed:18057100). Localized to centrosomes during interphase and mitosis (PubMed:25936915). Localizes to sites of DNA double-strand break repair (By similarity). Localization to the mitochondrion during apoptosis following phosphorylation of Ser-349 (PubMed:25936915).</text>
</comment>
<comment type="alternative products">
    <event type="alternative splicing"/>
    <isoform>
        <id>Q9CWU5-1</id>
        <name evidence="3">1</name>
        <name evidence="3">Filia 1.6</name>
        <sequence type="displayed"/>
    </isoform>
    <isoform>
        <id>Q9CWU5-2</id>
        <name evidence="3">2</name>
        <name evidence="3">Filia 1.2</name>
        <sequence type="described" ref="VSP_040951 VSP_040952"/>
    </isoform>
    <isoform>
        <id>Q9CWU5-3</id>
        <name evidence="15">3</name>
        <sequence type="described" ref="VSP_040950"/>
    </isoform>
</comment>
<comment type="tissue specificity">
    <text evidence="3">Detected in ovary, but not in testis or somatic tissues. In the ovary, expressed in growing oocytes.</text>
</comment>
<comment type="developmental stage">
    <text evidence="12">Expressed in the brain at low levels during fetal development, from 13.5 dpc to 18.5 dpc, however significantly increased after birth from P1 to P60 (PubMed:33115731). Highly expressed in neural stem progenitor cells in the hippocampus after birth (PubMed:33115731).</text>
</comment>
<comment type="developmental stage">
    <molecule>Isoform 1</molecule>
    <text evidence="3">Expressed in growing oocytes but diminishes in fully grown oocytes (PubMed:18057100). Detected at very low levels in morula and early blastocyst (PubMed:18057100).</text>
</comment>
<comment type="developmental stage">
    <molecule>Isoform 2</molecule>
    <text evidence="3">Expressed in growing oocytes, ovulated eggs and preimplantation embryos up to the morula stage and decreases markedly at the blastocyst stage (at protein level).</text>
</comment>
<comment type="induction">
    <text evidence="8 12">Induced by ultraviolet light, etoposide, doxorubicin, camptothecin and hydroxyl urea in embryonic stem cells (PubMed:25936915). Induced by etoposide and hydroxy urea in neural stem cells (PubMed:33115731).</text>
</comment>
<comment type="domain">
    <text evidence="6">Contains 1 atypical KH domain, which is still capable of binding RNA.</text>
</comment>
<comment type="PTM">
    <text evidence="10">Phosphorylation at Ser-151 is required to promote stalled fork restart.</text>
</comment>
<comment type="disruption phenotype">
    <text evidence="5 10 11 12">Reduced fecundity and impaired preimplantation embryo development with a high incidence of aneuploidy due to abnormal spindle assembly, chromosomal misalignment and spindle assembly checkpoint inactivation (PubMed:19376971). Loss of cytoplasmic lattices and aberrant organelle distribution in oocytes (PubMed:31575650). Increase in abnormal embryonic structure and loss of the embryo following compromised post-implantation embryo development (PubMed:29125140). Knockout mice show normal brain structure and weight (PubMed:33115731). Increased DNA double-strand breaks in hippocampus neural stem cells at P1 to 1 year of age (PubMed:33115731). Reduced hippocampal neural stem cell proliferation from P7 to P60 (PubMed:33115731). Reduced differentiation of neurons and dendritic spines formation in the dentate gyrus from P13 to P66 (PubMed:33115731). Impaired hippocampus-dependent spatial learning, memory and anxiety from 2 months to 1 year of age (PubMed:33115731).</text>
</comment>
<comment type="similarity">
    <text evidence="19">Belongs to the KHDC1 family.</text>
</comment>
<feature type="chain" id="PRO_0000407378" description="KH domain-containing protein 3">
    <location>
        <begin position="1"/>
        <end position="440"/>
    </location>
</feature>
<feature type="domain" description="KH; atypical">
    <location>
        <begin position="40"/>
        <end position="118"/>
    </location>
</feature>
<feature type="region of interest" description="Involved in RNA binding" evidence="6">
    <location>
        <begin position="1"/>
        <end position="39"/>
    </location>
</feature>
<feature type="region of interest" description="Disordered" evidence="2">
    <location>
        <begin position="132"/>
        <end position="201"/>
    </location>
</feature>
<feature type="region of interest" description="Required for interaction with NUMA1 and regulation of apoptosis in response to DNA damage" evidence="8">
    <location>
        <begin position="341"/>
        <end position="440"/>
    </location>
</feature>
<feature type="site" description="Not required for interaction with OOEP" evidence="10">
    <location>
        <position position="151"/>
    </location>
</feature>
<feature type="modified residue" description="Phosphoserine; by ATR" evidence="10">
    <location>
        <position position="151"/>
    </location>
</feature>
<feature type="modified residue" description="Phosphothreonine" evidence="1">
    <location>
        <position position="274"/>
    </location>
</feature>
<feature type="modified residue" description="Phosphothreonine" evidence="1">
    <location>
        <position position="286"/>
    </location>
</feature>
<feature type="modified residue" description="Phosphoserine" evidence="8">
    <location>
        <position position="349"/>
    </location>
</feature>
<feature type="splice variant" id="VSP_040950" description="In isoform 3." evidence="18">
    <location>
        <begin position="148"/>
        <end position="171"/>
    </location>
</feature>
<feature type="splice variant" id="VSP_040951" description="In isoform 2." evidence="16">
    <original>VREAAT</original>
    <variation>ESGRTE</variation>
    <location>
        <begin position="341"/>
        <end position="346"/>
    </location>
</feature>
<feature type="splice variant" id="VSP_040952" description="In isoform 2." evidence="16">
    <location>
        <begin position="347"/>
        <end position="440"/>
    </location>
</feature>
<feature type="mutagenesis site" description="Reduces restart of stalled replication forks and cells show an increase in DNA double strand breaks. Decreases phosphorylation of ATR at 'S-428'. Reduces TRIM25 ubiquitination of BLM and subsequent localization to DNA replication forks. Reduces phosphorylation and activation of ATR. No effect on Filia distribution at replication forks or nascent DNA degradation following DNA damage. Not effect on interaction with OOEP." evidence="10">
    <original>S</original>
    <variation>A</variation>
    <location>
        <position position="151"/>
    </location>
</feature>
<feature type="mutagenesis site" description="No effect on localization at replication forks, nascent DNA degradation following DNA damage, restart of stalled replication forks or levels of DNA damage." evidence="10">
    <original>S</original>
    <variation>D</variation>
    <location>
        <position position="151"/>
    </location>
</feature>
<feature type="mutagenesis site" description="Abolishes localization to the nucleus and enhances localization to the mitochondrion. Reduces stalled replication fork restart. Abolishes ATR-mediated phosphorylation of S-151. No effect on phosphorylation and activation of ATR. No effect on localization to centrosomes or centrosome integrity." evidence="8 10">
    <original>S</original>
    <variation>A</variation>
    <location>
        <position position="349"/>
    </location>
</feature>
<feature type="mutagenesis site" description="Abolishes DNA double-strand break repair and subsequent regulation of apoptosis. Abolishes localization to the mitochondrion. No effect on localization to centrosomes or centrosome integrity." evidence="8">
    <original>S</original>
    <variation>D</variation>
    <location>
        <position position="349"/>
    </location>
</feature>
<feature type="strand" evidence="25">
    <location>
        <begin position="13"/>
        <end position="17"/>
    </location>
</feature>
<feature type="strand" evidence="25">
    <location>
        <begin position="20"/>
        <end position="23"/>
    </location>
</feature>
<feature type="helix" evidence="25">
    <location>
        <begin position="35"/>
        <end position="38"/>
    </location>
</feature>
<feature type="strand" evidence="25">
    <location>
        <begin position="42"/>
        <end position="46"/>
    </location>
</feature>
<feature type="helix" evidence="25">
    <location>
        <begin position="48"/>
        <end position="50"/>
    </location>
</feature>
<feature type="helix" evidence="25">
    <location>
        <begin position="51"/>
        <end position="55"/>
    </location>
</feature>
<feature type="helix" evidence="25">
    <location>
        <begin position="57"/>
        <end position="59"/>
    </location>
</feature>
<feature type="helix" evidence="25">
    <location>
        <begin position="62"/>
        <end position="69"/>
    </location>
</feature>
<feature type="strand" evidence="25">
    <location>
        <begin position="71"/>
        <end position="76"/>
    </location>
</feature>
<feature type="strand" evidence="25">
    <location>
        <begin position="84"/>
        <end position="90"/>
    </location>
</feature>
<feature type="helix" evidence="25">
    <location>
        <begin position="92"/>
        <end position="116"/>
    </location>
</feature>
<organism>
    <name type="scientific">Mus musculus</name>
    <name type="common">Mouse</name>
    <dbReference type="NCBI Taxonomy" id="10090"/>
    <lineage>
        <taxon>Eukaryota</taxon>
        <taxon>Metazoa</taxon>
        <taxon>Chordata</taxon>
        <taxon>Craniata</taxon>
        <taxon>Vertebrata</taxon>
        <taxon>Euteleostomi</taxon>
        <taxon>Mammalia</taxon>
        <taxon>Eutheria</taxon>
        <taxon>Euarchontoglires</taxon>
        <taxon>Glires</taxon>
        <taxon>Rodentia</taxon>
        <taxon>Myomorpha</taxon>
        <taxon>Muroidea</taxon>
        <taxon>Muridae</taxon>
        <taxon>Murinae</taxon>
        <taxon>Mus</taxon>
        <taxon>Mus</taxon>
    </lineage>
</organism>
<name>KHDC3_MOUSE</name>
<keyword id="KW-0002">3D-structure</keyword>
<keyword id="KW-0025">Alternative splicing</keyword>
<keyword id="KW-0131">Cell cycle</keyword>
<keyword id="KW-0158">Chromosome</keyword>
<keyword id="KW-0963">Cytoplasm</keyword>
<keyword id="KW-0206">Cytoskeleton</keyword>
<keyword id="KW-0217">Developmental protein</keyword>
<keyword id="KW-0496">Mitochondrion</keyword>
<keyword id="KW-0539">Nucleus</keyword>
<keyword id="KW-0597">Phosphoprotein</keyword>
<keyword id="KW-1185">Reference proteome</keyword>
<keyword id="KW-0694">RNA-binding</keyword>